<dbReference type="EMBL" id="U34874">
    <property type="protein sequence ID" value="AAB97111.1"/>
    <property type="molecule type" value="Genomic_DNA"/>
</dbReference>
<dbReference type="SMR" id="P94468"/>
<dbReference type="CAZy" id="GH68">
    <property type="family name" value="Glycoside Hydrolase Family 68"/>
</dbReference>
<dbReference type="GO" id="GO:0005576">
    <property type="term" value="C:extracellular region"/>
    <property type="evidence" value="ECO:0007669"/>
    <property type="project" value="UniProtKB-SubCell"/>
</dbReference>
<dbReference type="GO" id="GO:0050053">
    <property type="term" value="F:levansucrase activity"/>
    <property type="evidence" value="ECO:0007669"/>
    <property type="project" value="InterPro"/>
</dbReference>
<dbReference type="GO" id="GO:0009758">
    <property type="term" value="P:carbohydrate utilization"/>
    <property type="evidence" value="ECO:0007669"/>
    <property type="project" value="InterPro"/>
</dbReference>
<dbReference type="CDD" id="cd08997">
    <property type="entry name" value="GH68"/>
    <property type="match status" value="1"/>
</dbReference>
<dbReference type="Gene3D" id="2.115.10.20">
    <property type="entry name" value="Glycosyl hydrolase domain, family 43"/>
    <property type="match status" value="1"/>
</dbReference>
<dbReference type="InterPro" id="IPR003469">
    <property type="entry name" value="Glyco_hydro_68"/>
</dbReference>
<dbReference type="InterPro" id="IPR023296">
    <property type="entry name" value="Glyco_hydro_beta-prop_sf"/>
</dbReference>
<dbReference type="Pfam" id="PF02435">
    <property type="entry name" value="Glyco_hydro_68"/>
    <property type="match status" value="1"/>
</dbReference>
<dbReference type="SUPFAM" id="SSF75005">
    <property type="entry name" value="Arabinanase/levansucrase/invertase"/>
    <property type="match status" value="1"/>
</dbReference>
<reference key="1">
    <citation type="journal article" date="1997" name="Biochim. Biophys. Acta">
        <title>A novel levansucrase-levanase gene cluster in Bacillus stearothermophilus ATCC12980.</title>
        <authorList>
            <person name="Li Y."/>
            <person name="Triccas J.A."/>
            <person name="Ferenci T."/>
        </authorList>
    </citation>
    <scope>NUCLEOTIDE SEQUENCE [GENOMIC DNA]</scope>
    <scope>LACK OF FUNCTION AS A LEVANSUCRASE</scope>
    <source>
        <strain>ATCC 12980 / DSM 22 / CCM 2062 / JCM 2501 / NBRC 12550 / NCIMB 8923 / NCTC 10339 / R-35646 / VKM B-510</strain>
    </source>
</reference>
<reference key="2">
    <citation type="journal article" date="1999" name="Mol. Biol. (Mosk.)">
        <title>Homologous locus of Bacillus subtilis and Bacillus stearothermophilus genomes containing levansucrase and levanase genes.</title>
        <authorList>
            <person name="Naumoff D.G."/>
        </authorList>
    </citation>
    <scope>DISCUSSION OF SEQUENCE WITH RESPECT TO INACTIVITY</scope>
</reference>
<evidence type="ECO:0000250" key="1"/>
<evidence type="ECO:0000305" key="2"/>
<comment type="subcellular location">
    <subcellularLocation>
        <location evidence="2">Secreted</location>
    </subcellularLocation>
</comment>
<comment type="similarity">
    <text evidence="2">Belongs to the glycosyl hydrolase 68 family.</text>
</comment>
<comment type="caution">
    <text evidence="2">According to PubMed:9349714, does not have levansucrase activity, despite a very strong similarity to SacB from B.subtilis.</text>
</comment>
<comment type="caution">
    <text evidence="2">Ser-356 and Gln-363 are present instead of the conserved Phe and positively charged residue Lys/His/Arg, respectively, which could be important for activity. These point mutations might explain the inactivity of the enzyme.</text>
</comment>
<protein>
    <recommendedName>
        <fullName>Inactive levansucrase</fullName>
    </recommendedName>
</protein>
<gene>
    <name type="primary">sacB</name>
    <name type="synonym">surB</name>
</gene>
<sequence>MNIKKFAKQATVLTFTTALLAGGATQAFAKETNQKPYKETYGISHITRHDMLQIPEQQKNEKYQVPEFDSSTIKNISSAKGLDVWDSWPLQNADGTVANYHGYHIVFALAGDPKNADDTSIYMFYQKVGETSIDSWKTPGRVFKDSDKFDANDSILKDQTQEWSGSATFTSDGKIRLFYTDFSGKHYGKQTLTTAQVNVSASDSSLNINGVEDYKSIFDGDSKTYQNVQQFIDEGNYSSGDNHTLRDPHYVEDKGHKYLVFEANTGTEDGYQGEESLFNKAYYGKSTSFFRQESQKLLQSDKNRTAELANGALGMIELNDDYTLKKVMKPLIASNTVTDEIERANVFKMNGKWYLSTDSRGSQMTIDGITSNDIYMLGYVSNSLTGPYKPLNKTGLVLKMDLDPNDVTFTYSHFAVPQATGNNVVITSYMTNRGFYADKQSTFAPSFLLNIQGKKTSVVKASILDQGQLTVNQ</sequence>
<organism>
    <name type="scientific">Geobacillus stearothermophilus</name>
    <name type="common">Bacillus stearothermophilus</name>
    <dbReference type="NCBI Taxonomy" id="1422"/>
    <lineage>
        <taxon>Bacteria</taxon>
        <taxon>Bacillati</taxon>
        <taxon>Bacillota</taxon>
        <taxon>Bacilli</taxon>
        <taxon>Bacillales</taxon>
        <taxon>Anoxybacillaceae</taxon>
        <taxon>Geobacillus</taxon>
    </lineage>
</organism>
<feature type="signal peptide" evidence="1">
    <location>
        <begin position="1"/>
        <end position="29"/>
    </location>
</feature>
<feature type="chain" id="PRO_0000012248" description="Inactive levansucrase">
    <location>
        <begin position="30"/>
        <end position="473"/>
    </location>
</feature>
<name>LSCI_GEOSE</name>
<accession>P94468</accession>
<proteinExistence type="evidence at protein level"/>
<keyword id="KW-0964">Secreted</keyword>
<keyword id="KW-0732">Signal</keyword>